<feature type="initiator methionine" description="Removed" evidence="1">
    <location>
        <position position="1"/>
    </location>
</feature>
<feature type="chain" id="PRO_0000201672" description="Ribosome-binding ATPase YchF">
    <location>
        <begin position="2"/>
        <end position="362"/>
    </location>
</feature>
<feature type="domain" description="OBG-type G">
    <location>
        <begin position="3"/>
        <end position="255"/>
    </location>
</feature>
<feature type="domain" description="TGS" evidence="3">
    <location>
        <begin position="277"/>
        <end position="360"/>
    </location>
</feature>
<feature type="binding site" evidence="2">
    <location>
        <begin position="12"/>
        <end position="17"/>
    </location>
    <ligand>
        <name>ATP</name>
        <dbReference type="ChEBI" id="CHEBI:30616"/>
    </ligand>
</feature>
<feature type="binding site" evidence="1">
    <location>
        <position position="16"/>
    </location>
    <ligand>
        <name>Mg(2+)</name>
        <dbReference type="ChEBI" id="CHEBI:18420"/>
    </ligand>
</feature>
<feature type="binding site" evidence="1">
    <location>
        <position position="36"/>
    </location>
    <ligand>
        <name>Mg(2+)</name>
        <dbReference type="ChEBI" id="CHEBI:18420"/>
    </ligand>
</feature>
<sequence>MGFKCGIIGLPNVGKSTLFNLLTKGNSAVANFPFCTIKPNIGIVPVIDERINNLNQIVSPQKTVNAFIEFIDIAGLVKGASQGEGLGNQFLGNIRDVHAIAHVVRCFKDDNITHIYNQVQPIKDIDIINSELILSDFDLCEKTILKLQKKTLLKNKETQEKINTLKKCLNHLKQFFMLKTLNLNKTEKQLISYLRFLTLKPTMYIANINEEKESYYFLDKLNEIAKKEGSIVIPIHANLELDLVKMSDEEKKSFMKLFNIKTLGLNSIISSGYHLLNLITFFTVGDKEIRAWAIPNGSTSIEAAHKIHSDFSKGFIRAQIIKYVDFITYKSEAKIKEMGKFRTEGKQYYIQDGDIIHFLFNV</sequence>
<proteinExistence type="inferred from homology"/>
<protein>
    <recommendedName>
        <fullName evidence="2">Ribosome-binding ATPase YchF</fullName>
    </recommendedName>
</protein>
<comment type="function">
    <text evidence="2">ATPase that binds to both the 70S ribosome and the 50S ribosomal subunit in a nucleotide-independent manner.</text>
</comment>
<comment type="cofactor">
    <cofactor evidence="1">
        <name>Mg(2+)</name>
        <dbReference type="ChEBI" id="CHEBI:18420"/>
    </cofactor>
</comment>
<comment type="similarity">
    <text evidence="2">Belongs to the TRAFAC class OBG-HflX-like GTPase superfamily. OBG GTPase family. YchF/OLA1 subfamily.</text>
</comment>
<organism>
    <name type="scientific">Buchnera aphidicola subsp. Acyrthosiphon pisum (strain APS)</name>
    <name type="common">Acyrthosiphon pisum symbiotic bacterium</name>
    <dbReference type="NCBI Taxonomy" id="107806"/>
    <lineage>
        <taxon>Bacteria</taxon>
        <taxon>Pseudomonadati</taxon>
        <taxon>Pseudomonadota</taxon>
        <taxon>Gammaproteobacteria</taxon>
        <taxon>Enterobacterales</taxon>
        <taxon>Erwiniaceae</taxon>
        <taxon>Buchnera</taxon>
    </lineage>
</organism>
<evidence type="ECO:0000250" key="1"/>
<evidence type="ECO:0000255" key="2">
    <source>
        <dbReference type="HAMAP-Rule" id="MF_00944"/>
    </source>
</evidence>
<evidence type="ECO:0000255" key="3">
    <source>
        <dbReference type="PROSITE-ProRule" id="PRU01228"/>
    </source>
</evidence>
<dbReference type="EMBL" id="BA000003">
    <property type="protein sequence ID" value="BAB12908.1"/>
    <property type="molecule type" value="Genomic_DNA"/>
</dbReference>
<dbReference type="RefSeq" id="NP_240022.1">
    <property type="nucleotide sequence ID" value="NC_002528.1"/>
</dbReference>
<dbReference type="RefSeq" id="WP_009874148.1">
    <property type="nucleotide sequence ID" value="NZ_AP036055.1"/>
</dbReference>
<dbReference type="SMR" id="P57288"/>
<dbReference type="STRING" id="563178.BUAP5A_188"/>
<dbReference type="EnsemblBacteria" id="BAB12908">
    <property type="protein sequence ID" value="BAB12908"/>
    <property type="gene ID" value="BAB12908"/>
</dbReference>
<dbReference type="KEGG" id="buc:BU191"/>
<dbReference type="PATRIC" id="fig|107806.10.peg.202"/>
<dbReference type="eggNOG" id="COG0012">
    <property type="taxonomic scope" value="Bacteria"/>
</dbReference>
<dbReference type="HOGENOM" id="CLU_018395_0_1_6"/>
<dbReference type="Proteomes" id="UP000001806">
    <property type="component" value="Chromosome"/>
</dbReference>
<dbReference type="GO" id="GO:0005737">
    <property type="term" value="C:cytoplasm"/>
    <property type="evidence" value="ECO:0007669"/>
    <property type="project" value="TreeGrafter"/>
</dbReference>
<dbReference type="GO" id="GO:0005524">
    <property type="term" value="F:ATP binding"/>
    <property type="evidence" value="ECO:0007669"/>
    <property type="project" value="UniProtKB-UniRule"/>
</dbReference>
<dbReference type="GO" id="GO:0016887">
    <property type="term" value="F:ATP hydrolysis activity"/>
    <property type="evidence" value="ECO:0007669"/>
    <property type="project" value="UniProtKB-UniRule"/>
</dbReference>
<dbReference type="GO" id="GO:0005525">
    <property type="term" value="F:GTP binding"/>
    <property type="evidence" value="ECO:0007669"/>
    <property type="project" value="InterPro"/>
</dbReference>
<dbReference type="GO" id="GO:0046872">
    <property type="term" value="F:metal ion binding"/>
    <property type="evidence" value="ECO:0007669"/>
    <property type="project" value="UniProtKB-KW"/>
</dbReference>
<dbReference type="GO" id="GO:0043023">
    <property type="term" value="F:ribosomal large subunit binding"/>
    <property type="evidence" value="ECO:0007669"/>
    <property type="project" value="UniProtKB-UniRule"/>
</dbReference>
<dbReference type="CDD" id="cd04867">
    <property type="entry name" value="TGS_YchF_OLA1"/>
    <property type="match status" value="1"/>
</dbReference>
<dbReference type="CDD" id="cd01900">
    <property type="entry name" value="YchF"/>
    <property type="match status" value="1"/>
</dbReference>
<dbReference type="FunFam" id="1.10.150.300:FF:000001">
    <property type="entry name" value="Ribosome-binding ATPase YchF"/>
    <property type="match status" value="1"/>
</dbReference>
<dbReference type="FunFam" id="3.10.20.30:FF:000001">
    <property type="entry name" value="Ribosome-binding ATPase YchF"/>
    <property type="match status" value="1"/>
</dbReference>
<dbReference type="Gene3D" id="3.10.20.30">
    <property type="match status" value="1"/>
</dbReference>
<dbReference type="Gene3D" id="3.40.50.300">
    <property type="entry name" value="P-loop containing nucleotide triphosphate hydrolases"/>
    <property type="match status" value="1"/>
</dbReference>
<dbReference type="Gene3D" id="1.10.150.300">
    <property type="entry name" value="TGS-like domain"/>
    <property type="match status" value="1"/>
</dbReference>
<dbReference type="HAMAP" id="MF_00944">
    <property type="entry name" value="YchF_OLA1_ATPase"/>
    <property type="match status" value="1"/>
</dbReference>
<dbReference type="InterPro" id="IPR004396">
    <property type="entry name" value="ATPase_YchF/OLA1"/>
</dbReference>
<dbReference type="InterPro" id="IPR012675">
    <property type="entry name" value="Beta-grasp_dom_sf"/>
</dbReference>
<dbReference type="InterPro" id="IPR031167">
    <property type="entry name" value="G_OBG"/>
</dbReference>
<dbReference type="InterPro" id="IPR006073">
    <property type="entry name" value="GTP-bd"/>
</dbReference>
<dbReference type="InterPro" id="IPR027417">
    <property type="entry name" value="P-loop_NTPase"/>
</dbReference>
<dbReference type="InterPro" id="IPR004095">
    <property type="entry name" value="TGS"/>
</dbReference>
<dbReference type="InterPro" id="IPR012676">
    <property type="entry name" value="TGS-like"/>
</dbReference>
<dbReference type="InterPro" id="IPR023192">
    <property type="entry name" value="TGS-like_dom_sf"/>
</dbReference>
<dbReference type="InterPro" id="IPR013029">
    <property type="entry name" value="YchF_C"/>
</dbReference>
<dbReference type="InterPro" id="IPR041706">
    <property type="entry name" value="YchF_N"/>
</dbReference>
<dbReference type="NCBIfam" id="TIGR00092">
    <property type="entry name" value="redox-regulated ATPase YchF"/>
    <property type="match status" value="1"/>
</dbReference>
<dbReference type="PANTHER" id="PTHR23305">
    <property type="entry name" value="OBG GTPASE FAMILY"/>
    <property type="match status" value="1"/>
</dbReference>
<dbReference type="PANTHER" id="PTHR23305:SF18">
    <property type="entry name" value="OBG-TYPE G DOMAIN-CONTAINING PROTEIN"/>
    <property type="match status" value="1"/>
</dbReference>
<dbReference type="Pfam" id="PF01926">
    <property type="entry name" value="MMR_HSR1"/>
    <property type="match status" value="1"/>
</dbReference>
<dbReference type="Pfam" id="PF06071">
    <property type="entry name" value="YchF-GTPase_C"/>
    <property type="match status" value="1"/>
</dbReference>
<dbReference type="PIRSF" id="PIRSF006641">
    <property type="entry name" value="CHP00092"/>
    <property type="match status" value="1"/>
</dbReference>
<dbReference type="PRINTS" id="PR00326">
    <property type="entry name" value="GTP1OBG"/>
</dbReference>
<dbReference type="SUPFAM" id="SSF52540">
    <property type="entry name" value="P-loop containing nucleoside triphosphate hydrolases"/>
    <property type="match status" value="1"/>
</dbReference>
<dbReference type="SUPFAM" id="SSF81271">
    <property type="entry name" value="TGS-like"/>
    <property type="match status" value="1"/>
</dbReference>
<dbReference type="PROSITE" id="PS51710">
    <property type="entry name" value="G_OBG"/>
    <property type="match status" value="1"/>
</dbReference>
<dbReference type="PROSITE" id="PS51880">
    <property type="entry name" value="TGS"/>
    <property type="match status" value="1"/>
</dbReference>
<accession>P57288</accession>
<keyword id="KW-0067">ATP-binding</keyword>
<keyword id="KW-0460">Magnesium</keyword>
<keyword id="KW-0479">Metal-binding</keyword>
<keyword id="KW-0547">Nucleotide-binding</keyword>
<keyword id="KW-1185">Reference proteome</keyword>
<gene>
    <name evidence="2" type="primary">ychF</name>
    <name type="synonym">engD</name>
    <name type="ordered locus">BU191</name>
</gene>
<name>YCHF_BUCAI</name>
<reference key="1">
    <citation type="journal article" date="2000" name="Nature">
        <title>Genome sequence of the endocellular bacterial symbiont of aphids Buchnera sp. APS.</title>
        <authorList>
            <person name="Shigenobu S."/>
            <person name="Watanabe H."/>
            <person name="Hattori M."/>
            <person name="Sakaki Y."/>
            <person name="Ishikawa H."/>
        </authorList>
    </citation>
    <scope>NUCLEOTIDE SEQUENCE [LARGE SCALE GENOMIC DNA]</scope>
    <source>
        <strain>APS</strain>
    </source>
</reference>